<accession>P16166</accession>
<accession>Q9ATX0</accession>
<dbReference type="EC" id="2.4.1.115"/>
<dbReference type="EMBL" id="X13500">
    <property type="protein sequence ID" value="CAA31855.1"/>
    <property type="molecule type" value="Genomic_DNA"/>
</dbReference>
<dbReference type="EMBL" id="AF391808">
    <property type="protein sequence ID" value="AAK73112.1"/>
    <property type="molecule type" value="Genomic_DNA"/>
</dbReference>
<dbReference type="PIR" id="S01052">
    <property type="entry name" value="S01052"/>
</dbReference>
<dbReference type="RefSeq" id="NP_001105886.1">
    <property type="nucleotide sequence ID" value="NM_001112416.1"/>
</dbReference>
<dbReference type="SMR" id="P16166"/>
<dbReference type="FunCoup" id="P16166">
    <property type="interactions" value="898"/>
</dbReference>
<dbReference type="STRING" id="4577.P16166"/>
<dbReference type="CAZy" id="GT1">
    <property type="family name" value="Glycosyltransferase Family 1"/>
</dbReference>
<dbReference type="GeneID" id="732800"/>
<dbReference type="KEGG" id="zma:732800"/>
<dbReference type="MaizeGDB" id="13885"/>
<dbReference type="InParanoid" id="P16166"/>
<dbReference type="OrthoDB" id="5835829at2759"/>
<dbReference type="UniPathway" id="UPA00009"/>
<dbReference type="Proteomes" id="UP000007305">
    <property type="component" value="Unplaced"/>
</dbReference>
<dbReference type="GO" id="GO:0047213">
    <property type="term" value="F:anthocyanidin 3-O-glucosyltransferase activity"/>
    <property type="evidence" value="ECO:0007669"/>
    <property type="project" value="UniProtKB-EC"/>
</dbReference>
<dbReference type="GO" id="GO:0009718">
    <property type="term" value="P:anthocyanin-containing compound biosynthetic process"/>
    <property type="evidence" value="ECO:0007669"/>
    <property type="project" value="UniProtKB-UniPathway"/>
</dbReference>
<dbReference type="CDD" id="cd03784">
    <property type="entry name" value="GT1_Gtf-like"/>
    <property type="match status" value="1"/>
</dbReference>
<dbReference type="FunFam" id="3.40.50.2000:FF:000091">
    <property type="entry name" value="Glycosyltransferase"/>
    <property type="match status" value="1"/>
</dbReference>
<dbReference type="FunFam" id="3.40.50.2000:FF:000225">
    <property type="entry name" value="Glycosyltransferase"/>
    <property type="match status" value="1"/>
</dbReference>
<dbReference type="Gene3D" id="3.40.50.2000">
    <property type="entry name" value="Glycogen Phosphorylase B"/>
    <property type="match status" value="2"/>
</dbReference>
<dbReference type="InterPro" id="IPR050481">
    <property type="entry name" value="UDP-glycosyltransf_plant"/>
</dbReference>
<dbReference type="InterPro" id="IPR002213">
    <property type="entry name" value="UDP_glucos_trans"/>
</dbReference>
<dbReference type="InterPro" id="IPR035595">
    <property type="entry name" value="UDP_glycos_trans_CS"/>
</dbReference>
<dbReference type="PANTHER" id="PTHR48049:SF65">
    <property type="entry name" value="ANTHOCYANIDIN 3-O-GLUCOSYLTRANSFERASE"/>
    <property type="match status" value="1"/>
</dbReference>
<dbReference type="PANTHER" id="PTHR48049">
    <property type="entry name" value="GLYCOSYLTRANSFERASE"/>
    <property type="match status" value="1"/>
</dbReference>
<dbReference type="Pfam" id="PF00201">
    <property type="entry name" value="UDPGT"/>
    <property type="match status" value="1"/>
</dbReference>
<dbReference type="SUPFAM" id="SSF53756">
    <property type="entry name" value="UDP-Glycosyltransferase/glycogen phosphorylase"/>
    <property type="match status" value="1"/>
</dbReference>
<dbReference type="PROSITE" id="PS00375">
    <property type="entry name" value="UDPGT"/>
    <property type="match status" value="1"/>
</dbReference>
<feature type="chain" id="PRO_0000074138" description="Anthocyanidin 3-O-glucosyltransferase">
    <location>
        <begin position="1"/>
        <end position="471"/>
    </location>
</feature>
<feature type="active site" description="Proton acceptor" evidence="1">
    <location>
        <position position="24"/>
    </location>
</feature>
<feature type="active site" description="Charge relay" evidence="1">
    <location>
        <position position="130"/>
    </location>
</feature>
<feature type="binding site" evidence="2">
    <location>
        <position position="24"/>
    </location>
    <ligand>
        <name>an anthocyanidin</name>
        <dbReference type="ChEBI" id="CHEBI:143576"/>
    </ligand>
</feature>
<feature type="binding site" evidence="1">
    <location>
        <position position="152"/>
    </location>
    <ligand>
        <name>UDP-alpha-D-glucose</name>
        <dbReference type="ChEBI" id="CHEBI:58885"/>
    </ligand>
</feature>
<feature type="binding site" evidence="2">
    <location>
        <position position="161"/>
    </location>
    <ligand>
        <name>an anthocyanidin</name>
        <dbReference type="ChEBI" id="CHEBI:143576"/>
    </ligand>
</feature>
<feature type="binding site" evidence="1">
    <location>
        <position position="352"/>
    </location>
    <ligand>
        <name>UDP-alpha-D-glucose</name>
        <dbReference type="ChEBI" id="CHEBI:58885"/>
    </ligand>
</feature>
<feature type="binding site" evidence="1">
    <location>
        <position position="354"/>
    </location>
    <ligand>
        <name>UDP-alpha-D-glucose</name>
        <dbReference type="ChEBI" id="CHEBI:58885"/>
    </ligand>
</feature>
<feature type="binding site" evidence="1">
    <location>
        <position position="369"/>
    </location>
    <ligand>
        <name>UDP-alpha-D-glucose</name>
        <dbReference type="ChEBI" id="CHEBI:58885"/>
    </ligand>
</feature>
<feature type="binding site" evidence="1">
    <location>
        <position position="372"/>
    </location>
    <ligand>
        <name>UDP-alpha-D-glucose</name>
        <dbReference type="ChEBI" id="CHEBI:58885"/>
    </ligand>
</feature>
<feature type="binding site" evidence="1">
    <location>
        <position position="374"/>
    </location>
    <ligand>
        <name>UDP-alpha-D-glucose</name>
        <dbReference type="ChEBI" id="CHEBI:58885"/>
    </ligand>
</feature>
<feature type="binding site" evidence="1">
    <location>
        <position position="377"/>
    </location>
    <ligand>
        <name>UDP-alpha-D-glucose</name>
        <dbReference type="ChEBI" id="CHEBI:58885"/>
    </ligand>
</feature>
<feature type="binding site" evidence="2">
    <location>
        <position position="392"/>
    </location>
    <ligand>
        <name>an anthocyanidin</name>
        <dbReference type="ChEBI" id="CHEBI:143576"/>
    </ligand>
</feature>
<feature type="binding site" evidence="1">
    <location>
        <position position="393"/>
    </location>
    <ligand>
        <name>UDP-alpha-D-glucose</name>
        <dbReference type="ChEBI" id="CHEBI:58885"/>
    </ligand>
</feature>
<feature type="binding site" evidence="1">
    <location>
        <position position="394"/>
    </location>
    <ligand>
        <name>UDP-alpha-D-glucose</name>
        <dbReference type="ChEBI" id="CHEBI:58885"/>
    </ligand>
</feature>
<proteinExistence type="inferred from homology"/>
<evidence type="ECO:0000250" key="1">
    <source>
        <dbReference type="UniProtKB" id="A0A0A1HA03"/>
    </source>
</evidence>
<evidence type="ECO:0000250" key="2">
    <source>
        <dbReference type="UniProtKB" id="P51094"/>
    </source>
</evidence>
<evidence type="ECO:0000305" key="3"/>
<organism>
    <name type="scientific">Zea mays</name>
    <name type="common">Maize</name>
    <dbReference type="NCBI Taxonomy" id="4577"/>
    <lineage>
        <taxon>Eukaryota</taxon>
        <taxon>Viridiplantae</taxon>
        <taxon>Streptophyta</taxon>
        <taxon>Embryophyta</taxon>
        <taxon>Tracheophyta</taxon>
        <taxon>Spermatophyta</taxon>
        <taxon>Magnoliopsida</taxon>
        <taxon>Liliopsida</taxon>
        <taxon>Poales</taxon>
        <taxon>Poaceae</taxon>
        <taxon>PACMAD clade</taxon>
        <taxon>Panicoideae</taxon>
        <taxon>Andropogonodae</taxon>
        <taxon>Andropogoneae</taxon>
        <taxon>Tripsacinae</taxon>
        <taxon>Zea</taxon>
    </lineage>
</organism>
<comment type="function">
    <text>In the presence of other necessary color factors, this glycosylation reaction allows the accumulation of anthocyanin pigments.</text>
</comment>
<comment type="catalytic activity">
    <reaction>
        <text>an anthocyanidin + UDP-alpha-D-glucose + H(+) = an anthocyanidin 3-O-beta-D-glucoside + UDP</text>
        <dbReference type="Rhea" id="RHEA:20093"/>
        <dbReference type="ChEBI" id="CHEBI:15378"/>
        <dbReference type="ChEBI" id="CHEBI:16307"/>
        <dbReference type="ChEBI" id="CHEBI:58223"/>
        <dbReference type="ChEBI" id="CHEBI:58885"/>
        <dbReference type="ChEBI" id="CHEBI:143576"/>
        <dbReference type="EC" id="2.4.1.115"/>
    </reaction>
</comment>
<comment type="pathway">
    <text>Pigment biosynthesis; anthocyanin biosynthesis.</text>
</comment>
<comment type="similarity">
    <text evidence="3">Belongs to the UDP-glycosyltransferase family.</text>
</comment>
<gene>
    <name type="primary">BZ1</name>
    <name type="synonym">UGT71A1</name>
</gene>
<name>UFOG1_MAIZE</name>
<sequence>MAPADGESSPPPHVAVVAFPFSSHAAVLLSIARALAAAAAPSGATLSFLSTASSLAQLRKASSASAGHGLPGNLRFVEVPDGAPAAEETVPVPRQMQLFMEAAEAGGVKAWLEAARAAAGGARVTCVVGDAFVWPAADAAASAGAPWVPVWTAASCALLAHIRTDALREDVGDQAANRVDGLLISHPGLASYRVRDLPDGVVSGDFNYVINLLVHRMGQCLPRSAAAVALNTFPGLDPPDVTAALAEILPNCVPFGPYHLLLAEDDADTAAPADPHGCLAWLGRQPARGVAYVSFGTVACPRPDELRELAAGLEDSGAPFLWSLREDSWPHLPPGFLDRAAGTGSGLVVPWAPQVAVLRHPSVGAFVTHAGWASVLEGLSSGVPMACRPFFGDQRMNARSVAHVWGFGAAFEGAMTSAGVATAVEELLRGEEGARMRARAKELQALVAEAFGPGGECRKNFDRFVEIVCRA</sequence>
<reference key="1">
    <citation type="journal article" date="1988" name="Plant Mol. Biol.">
        <title>Sequence comparisons of 3 wild-type bronze-1 alleles from Zea mays.</title>
        <authorList>
            <person name="Furtek D."/>
            <person name="Schiefelbein J.W."/>
            <person name="Johnston F."/>
            <person name="Nelson O.E. Jr."/>
        </authorList>
        <dbReference type="AGRICOLA" id="IND92000025"/>
    </citation>
    <scope>NUCLEOTIDE SEQUENCE [GENOMIC DNA]</scope>
</reference>
<reference key="2">
    <citation type="journal article" date="1988" name="Genetics">
        <title>Sequence of three bronze alleles of maize and correlation with the genetic fine structure.</title>
        <authorList>
            <person name="Ralston E.J."/>
            <person name="English J.J."/>
            <person name="Dooner H.K."/>
        </authorList>
    </citation>
    <scope>NUCLEOTIDE SEQUENCE [GENOMIC DNA]</scope>
</reference>
<keyword id="KW-0328">Glycosyltransferase</keyword>
<keyword id="KW-1185">Reference proteome</keyword>
<keyword id="KW-0808">Transferase</keyword>
<protein>
    <recommendedName>
        <fullName>Anthocyanidin 3-O-glucosyltransferase</fullName>
        <ecNumber>2.4.1.115</ecNumber>
    </recommendedName>
    <alternativeName>
        <fullName>Bronze-1</fullName>
    </alternativeName>
    <alternativeName>
        <fullName>Bz-McC allele</fullName>
    </alternativeName>
    <alternativeName>
        <fullName>Flavonol 3-O-glucosyltransferase</fullName>
    </alternativeName>
    <alternativeName>
        <fullName>UDP-glucose flavonoid 3-O-glucosyltransferase</fullName>
    </alternativeName>
</protein>